<accession>Q73KU4</accession>
<sequence length="101" mass="11492">MELKKQAQKGTIISEKFIEPENYRVILLNDDFTPMDFVVAVLISIFNKSQEEAETLMFKVHKTGQASVGIYVYDIATTKCFQVLTAAKNNNFPLQCKVEKV</sequence>
<evidence type="ECO:0000255" key="1">
    <source>
        <dbReference type="HAMAP-Rule" id="MF_00302"/>
    </source>
</evidence>
<protein>
    <recommendedName>
        <fullName evidence="1">ATP-dependent Clp protease adapter protein ClpS</fullName>
    </recommendedName>
</protein>
<gene>
    <name evidence="1" type="primary">clpS</name>
    <name type="ordered locus">TDE_2123</name>
</gene>
<proteinExistence type="inferred from homology"/>
<organism>
    <name type="scientific">Treponema denticola (strain ATCC 35405 / DSM 14222 / CIP 103919 / JCM 8153 / KCTC 15104)</name>
    <dbReference type="NCBI Taxonomy" id="243275"/>
    <lineage>
        <taxon>Bacteria</taxon>
        <taxon>Pseudomonadati</taxon>
        <taxon>Spirochaetota</taxon>
        <taxon>Spirochaetia</taxon>
        <taxon>Spirochaetales</taxon>
        <taxon>Treponemataceae</taxon>
        <taxon>Treponema</taxon>
    </lineage>
</organism>
<feature type="chain" id="PRO_0000215755" description="ATP-dependent Clp protease adapter protein ClpS">
    <location>
        <begin position="1"/>
        <end position="101"/>
    </location>
</feature>
<dbReference type="EMBL" id="AE017226">
    <property type="protein sequence ID" value="AAS12643.1"/>
    <property type="molecule type" value="Genomic_DNA"/>
</dbReference>
<dbReference type="RefSeq" id="NP_972724.1">
    <property type="nucleotide sequence ID" value="NC_002967.9"/>
</dbReference>
<dbReference type="RefSeq" id="WP_002668196.1">
    <property type="nucleotide sequence ID" value="NC_002967.9"/>
</dbReference>
<dbReference type="SMR" id="Q73KU4"/>
<dbReference type="STRING" id="243275.TDE_2123"/>
<dbReference type="PaxDb" id="243275-TDE_2123"/>
<dbReference type="GeneID" id="2739382"/>
<dbReference type="KEGG" id="tde:TDE_2123"/>
<dbReference type="PATRIC" id="fig|243275.7.peg.2006"/>
<dbReference type="eggNOG" id="COG2127">
    <property type="taxonomic scope" value="Bacteria"/>
</dbReference>
<dbReference type="HOGENOM" id="CLU_134358_1_0_12"/>
<dbReference type="OrthoDB" id="9796121at2"/>
<dbReference type="Proteomes" id="UP000008212">
    <property type="component" value="Chromosome"/>
</dbReference>
<dbReference type="GO" id="GO:0030163">
    <property type="term" value="P:protein catabolic process"/>
    <property type="evidence" value="ECO:0007669"/>
    <property type="project" value="InterPro"/>
</dbReference>
<dbReference type="GO" id="GO:0006508">
    <property type="term" value="P:proteolysis"/>
    <property type="evidence" value="ECO:0007669"/>
    <property type="project" value="UniProtKB-UniRule"/>
</dbReference>
<dbReference type="FunFam" id="3.30.1390.10:FF:000002">
    <property type="entry name" value="ATP-dependent Clp protease adapter protein ClpS"/>
    <property type="match status" value="1"/>
</dbReference>
<dbReference type="Gene3D" id="3.30.1390.10">
    <property type="match status" value="1"/>
</dbReference>
<dbReference type="HAMAP" id="MF_00302">
    <property type="entry name" value="ClpS"/>
    <property type="match status" value="1"/>
</dbReference>
<dbReference type="InterPro" id="IPR022935">
    <property type="entry name" value="ClpS"/>
</dbReference>
<dbReference type="InterPro" id="IPR003769">
    <property type="entry name" value="ClpS_core"/>
</dbReference>
<dbReference type="InterPro" id="IPR014719">
    <property type="entry name" value="Ribosomal_bL12_C/ClpS-like"/>
</dbReference>
<dbReference type="PANTHER" id="PTHR33473:SF19">
    <property type="entry name" value="ATP-DEPENDENT CLP PROTEASE ADAPTER PROTEIN CLPS"/>
    <property type="match status" value="1"/>
</dbReference>
<dbReference type="PANTHER" id="PTHR33473">
    <property type="entry name" value="ATP-DEPENDENT CLP PROTEASE ADAPTER PROTEIN CLPS1, CHLOROPLASTIC"/>
    <property type="match status" value="1"/>
</dbReference>
<dbReference type="Pfam" id="PF02617">
    <property type="entry name" value="ClpS"/>
    <property type="match status" value="1"/>
</dbReference>
<dbReference type="SUPFAM" id="SSF54736">
    <property type="entry name" value="ClpS-like"/>
    <property type="match status" value="1"/>
</dbReference>
<reference key="1">
    <citation type="journal article" date="2004" name="Proc. Natl. Acad. Sci. U.S.A.">
        <title>Comparison of the genome of the oral pathogen Treponema denticola with other spirochete genomes.</title>
        <authorList>
            <person name="Seshadri R."/>
            <person name="Myers G.S.A."/>
            <person name="Tettelin H."/>
            <person name="Eisen J.A."/>
            <person name="Heidelberg J.F."/>
            <person name="Dodson R.J."/>
            <person name="Davidsen T.M."/>
            <person name="DeBoy R.T."/>
            <person name="Fouts D.E."/>
            <person name="Haft D.H."/>
            <person name="Selengut J."/>
            <person name="Ren Q."/>
            <person name="Brinkac L.M."/>
            <person name="Madupu R."/>
            <person name="Kolonay J.F."/>
            <person name="Durkin S.A."/>
            <person name="Daugherty S.C."/>
            <person name="Shetty J."/>
            <person name="Shvartsbeyn A."/>
            <person name="Gebregeorgis E."/>
            <person name="Geer K."/>
            <person name="Tsegaye G."/>
            <person name="Malek J.A."/>
            <person name="Ayodeji B."/>
            <person name="Shatsman S."/>
            <person name="McLeod M.P."/>
            <person name="Smajs D."/>
            <person name="Howell J.K."/>
            <person name="Pal S."/>
            <person name="Amin A."/>
            <person name="Vashisth P."/>
            <person name="McNeill T.Z."/>
            <person name="Xiang Q."/>
            <person name="Sodergren E."/>
            <person name="Baca E."/>
            <person name="Weinstock G.M."/>
            <person name="Norris S.J."/>
            <person name="Fraser C.M."/>
            <person name="Paulsen I.T."/>
        </authorList>
    </citation>
    <scope>NUCLEOTIDE SEQUENCE [LARGE SCALE GENOMIC DNA]</scope>
    <source>
        <strain>ATCC 35405 / DSM 14222 / CIP 103919 / JCM 8153 / KCTC 15104</strain>
    </source>
</reference>
<name>CLPS_TREDE</name>
<comment type="function">
    <text evidence="1">Involved in the modulation of the specificity of the ClpAP-mediated ATP-dependent protein degradation.</text>
</comment>
<comment type="subunit">
    <text evidence="1">Binds to the N-terminal domain of the chaperone ClpA.</text>
</comment>
<comment type="similarity">
    <text evidence="1">Belongs to the ClpS family.</text>
</comment>
<keyword id="KW-1185">Reference proteome</keyword>